<organism>
    <name type="scientific">Drosophila melanogaster</name>
    <name type="common">Fruit fly</name>
    <dbReference type="NCBI Taxonomy" id="7227"/>
    <lineage>
        <taxon>Eukaryota</taxon>
        <taxon>Metazoa</taxon>
        <taxon>Ecdysozoa</taxon>
        <taxon>Arthropoda</taxon>
        <taxon>Hexapoda</taxon>
        <taxon>Insecta</taxon>
        <taxon>Pterygota</taxon>
        <taxon>Neoptera</taxon>
        <taxon>Endopterygota</taxon>
        <taxon>Diptera</taxon>
        <taxon>Brachycera</taxon>
        <taxon>Muscomorpha</taxon>
        <taxon>Ephydroidea</taxon>
        <taxon>Drosophilidae</taxon>
        <taxon>Drosophila</taxon>
        <taxon>Sophophora</taxon>
    </lineage>
</organism>
<reference key="1">
    <citation type="journal article" date="2000" name="Science">
        <title>The genome sequence of Drosophila melanogaster.</title>
        <authorList>
            <person name="Adams M.D."/>
            <person name="Celniker S.E."/>
            <person name="Holt R.A."/>
            <person name="Evans C.A."/>
            <person name="Gocayne J.D."/>
            <person name="Amanatides P.G."/>
            <person name="Scherer S.E."/>
            <person name="Li P.W."/>
            <person name="Hoskins R.A."/>
            <person name="Galle R.F."/>
            <person name="George R.A."/>
            <person name="Lewis S.E."/>
            <person name="Richards S."/>
            <person name="Ashburner M."/>
            <person name="Henderson S.N."/>
            <person name="Sutton G.G."/>
            <person name="Wortman J.R."/>
            <person name="Yandell M.D."/>
            <person name="Zhang Q."/>
            <person name="Chen L.X."/>
            <person name="Brandon R.C."/>
            <person name="Rogers Y.-H.C."/>
            <person name="Blazej R.G."/>
            <person name="Champe M."/>
            <person name="Pfeiffer B.D."/>
            <person name="Wan K.H."/>
            <person name="Doyle C."/>
            <person name="Baxter E.G."/>
            <person name="Helt G."/>
            <person name="Nelson C.R."/>
            <person name="Miklos G.L.G."/>
            <person name="Abril J.F."/>
            <person name="Agbayani A."/>
            <person name="An H.-J."/>
            <person name="Andrews-Pfannkoch C."/>
            <person name="Baldwin D."/>
            <person name="Ballew R.M."/>
            <person name="Basu A."/>
            <person name="Baxendale J."/>
            <person name="Bayraktaroglu L."/>
            <person name="Beasley E.M."/>
            <person name="Beeson K.Y."/>
            <person name="Benos P.V."/>
            <person name="Berman B.P."/>
            <person name="Bhandari D."/>
            <person name="Bolshakov S."/>
            <person name="Borkova D."/>
            <person name="Botchan M.R."/>
            <person name="Bouck J."/>
            <person name="Brokstein P."/>
            <person name="Brottier P."/>
            <person name="Burtis K.C."/>
            <person name="Busam D.A."/>
            <person name="Butler H."/>
            <person name="Cadieu E."/>
            <person name="Center A."/>
            <person name="Chandra I."/>
            <person name="Cherry J.M."/>
            <person name="Cawley S."/>
            <person name="Dahlke C."/>
            <person name="Davenport L.B."/>
            <person name="Davies P."/>
            <person name="de Pablos B."/>
            <person name="Delcher A."/>
            <person name="Deng Z."/>
            <person name="Mays A.D."/>
            <person name="Dew I."/>
            <person name="Dietz S.M."/>
            <person name="Dodson K."/>
            <person name="Doup L.E."/>
            <person name="Downes M."/>
            <person name="Dugan-Rocha S."/>
            <person name="Dunkov B.C."/>
            <person name="Dunn P."/>
            <person name="Durbin K.J."/>
            <person name="Evangelista C.C."/>
            <person name="Ferraz C."/>
            <person name="Ferriera S."/>
            <person name="Fleischmann W."/>
            <person name="Fosler C."/>
            <person name="Gabrielian A.E."/>
            <person name="Garg N.S."/>
            <person name="Gelbart W.M."/>
            <person name="Glasser K."/>
            <person name="Glodek A."/>
            <person name="Gong F."/>
            <person name="Gorrell J.H."/>
            <person name="Gu Z."/>
            <person name="Guan P."/>
            <person name="Harris M."/>
            <person name="Harris N.L."/>
            <person name="Harvey D.A."/>
            <person name="Heiman T.J."/>
            <person name="Hernandez J.R."/>
            <person name="Houck J."/>
            <person name="Hostin D."/>
            <person name="Houston K.A."/>
            <person name="Howland T.J."/>
            <person name="Wei M.-H."/>
            <person name="Ibegwam C."/>
            <person name="Jalali M."/>
            <person name="Kalush F."/>
            <person name="Karpen G.H."/>
            <person name="Ke Z."/>
            <person name="Kennison J.A."/>
            <person name="Ketchum K.A."/>
            <person name="Kimmel B.E."/>
            <person name="Kodira C.D."/>
            <person name="Kraft C.L."/>
            <person name="Kravitz S."/>
            <person name="Kulp D."/>
            <person name="Lai Z."/>
            <person name="Lasko P."/>
            <person name="Lei Y."/>
            <person name="Levitsky A.A."/>
            <person name="Li J.H."/>
            <person name="Li Z."/>
            <person name="Liang Y."/>
            <person name="Lin X."/>
            <person name="Liu X."/>
            <person name="Mattei B."/>
            <person name="McIntosh T.C."/>
            <person name="McLeod M.P."/>
            <person name="McPherson D."/>
            <person name="Merkulov G."/>
            <person name="Milshina N.V."/>
            <person name="Mobarry C."/>
            <person name="Morris J."/>
            <person name="Moshrefi A."/>
            <person name="Mount S.M."/>
            <person name="Moy M."/>
            <person name="Murphy B."/>
            <person name="Murphy L."/>
            <person name="Muzny D.M."/>
            <person name="Nelson D.L."/>
            <person name="Nelson D.R."/>
            <person name="Nelson K.A."/>
            <person name="Nixon K."/>
            <person name="Nusskern D.R."/>
            <person name="Pacleb J.M."/>
            <person name="Palazzolo M."/>
            <person name="Pittman G.S."/>
            <person name="Pan S."/>
            <person name="Pollard J."/>
            <person name="Puri V."/>
            <person name="Reese M.G."/>
            <person name="Reinert K."/>
            <person name="Remington K."/>
            <person name="Saunders R.D.C."/>
            <person name="Scheeler F."/>
            <person name="Shen H."/>
            <person name="Shue B.C."/>
            <person name="Siden-Kiamos I."/>
            <person name="Simpson M."/>
            <person name="Skupski M.P."/>
            <person name="Smith T.J."/>
            <person name="Spier E."/>
            <person name="Spradling A.C."/>
            <person name="Stapleton M."/>
            <person name="Strong R."/>
            <person name="Sun E."/>
            <person name="Svirskas R."/>
            <person name="Tector C."/>
            <person name="Turner R."/>
            <person name="Venter E."/>
            <person name="Wang A.H."/>
            <person name="Wang X."/>
            <person name="Wang Z.-Y."/>
            <person name="Wassarman D.A."/>
            <person name="Weinstock G.M."/>
            <person name="Weissenbach J."/>
            <person name="Williams S.M."/>
            <person name="Woodage T."/>
            <person name="Worley K.C."/>
            <person name="Wu D."/>
            <person name="Yang S."/>
            <person name="Yao Q.A."/>
            <person name="Ye J."/>
            <person name="Yeh R.-F."/>
            <person name="Zaveri J.S."/>
            <person name="Zhan M."/>
            <person name="Zhang G."/>
            <person name="Zhao Q."/>
            <person name="Zheng L."/>
            <person name="Zheng X.H."/>
            <person name="Zhong F.N."/>
            <person name="Zhong W."/>
            <person name="Zhou X."/>
            <person name="Zhu S.C."/>
            <person name="Zhu X."/>
            <person name="Smith H.O."/>
            <person name="Gibbs R.A."/>
            <person name="Myers E.W."/>
            <person name="Rubin G.M."/>
            <person name="Venter J.C."/>
        </authorList>
    </citation>
    <scope>NUCLEOTIDE SEQUENCE [LARGE SCALE GENOMIC DNA]</scope>
    <source>
        <strain>Berkeley</strain>
    </source>
</reference>
<reference key="2">
    <citation type="journal article" date="2002" name="Genome Biol.">
        <title>Annotation of the Drosophila melanogaster euchromatic genome: a systematic review.</title>
        <authorList>
            <person name="Misra S."/>
            <person name="Crosby M.A."/>
            <person name="Mungall C.J."/>
            <person name="Matthews B.B."/>
            <person name="Campbell K.S."/>
            <person name="Hradecky P."/>
            <person name="Huang Y."/>
            <person name="Kaminker J.S."/>
            <person name="Millburn G.H."/>
            <person name="Prochnik S.E."/>
            <person name="Smith C.D."/>
            <person name="Tupy J.L."/>
            <person name="Whitfield E.J."/>
            <person name="Bayraktaroglu L."/>
            <person name="Berman B.P."/>
            <person name="Bettencourt B.R."/>
            <person name="Celniker S.E."/>
            <person name="de Grey A.D.N.J."/>
            <person name="Drysdale R.A."/>
            <person name="Harris N.L."/>
            <person name="Richter J."/>
            <person name="Russo S."/>
            <person name="Schroeder A.J."/>
            <person name="Shu S.Q."/>
            <person name="Stapleton M."/>
            <person name="Yamada C."/>
            <person name="Ashburner M."/>
            <person name="Gelbart W.M."/>
            <person name="Rubin G.M."/>
            <person name="Lewis S.E."/>
        </authorList>
    </citation>
    <scope>GENOME REANNOTATION</scope>
    <source>
        <strain>Berkeley</strain>
    </source>
</reference>
<reference key="3">
    <citation type="journal article" date="2002" name="Genome Biol.">
        <title>A Drosophila full-length cDNA resource.</title>
        <authorList>
            <person name="Stapleton M."/>
            <person name="Carlson J.W."/>
            <person name="Brokstein P."/>
            <person name="Yu C."/>
            <person name="Champe M."/>
            <person name="George R.A."/>
            <person name="Guarin H."/>
            <person name="Kronmiller B."/>
            <person name="Pacleb J.M."/>
            <person name="Park S."/>
            <person name="Wan K.H."/>
            <person name="Rubin G.M."/>
            <person name="Celniker S.E."/>
        </authorList>
    </citation>
    <scope>NUCLEOTIDE SEQUENCE [LARGE SCALE MRNA]</scope>
    <source>
        <strain>Berkeley</strain>
        <tissue>Testis</tissue>
    </source>
</reference>
<proteinExistence type="evidence at transcript level"/>
<gene>
    <name type="primary">Cyp4p3</name>
    <name type="ORF">CG10843</name>
</gene>
<accession>Q9V559</accession>
<accession>Q8T8Z5</accession>
<feature type="chain" id="PRO_0000051847" description="Probable cytochrome P450 4p3">
    <location>
        <begin position="1"/>
        <end position="515"/>
    </location>
</feature>
<feature type="binding site" description="covalent" evidence="1">
    <location>
        <position position="322"/>
    </location>
    <ligand>
        <name>heme</name>
        <dbReference type="ChEBI" id="CHEBI:30413"/>
    </ligand>
</feature>
<feature type="binding site" description="axial binding residue" evidence="1">
    <location>
        <position position="461"/>
    </location>
    <ligand>
        <name>heme</name>
        <dbReference type="ChEBI" id="CHEBI:30413"/>
    </ligand>
    <ligandPart>
        <name>Fe</name>
        <dbReference type="ChEBI" id="CHEBI:18248"/>
    </ligandPart>
</feature>
<dbReference type="EC" id="1.14.-.-"/>
<dbReference type="EMBL" id="AE013599">
    <property type="protein sequence ID" value="AAF58961.2"/>
    <property type="molecule type" value="Genomic_DNA"/>
</dbReference>
<dbReference type="EMBL" id="AY075201">
    <property type="protein sequence ID" value="AAL68069.1"/>
    <property type="molecule type" value="mRNA"/>
</dbReference>
<dbReference type="RefSeq" id="NP_610473.1">
    <property type="nucleotide sequence ID" value="NM_136629.3"/>
</dbReference>
<dbReference type="SMR" id="Q9V559"/>
<dbReference type="STRING" id="7227.FBpp0087674"/>
<dbReference type="PaxDb" id="7227-FBpp0087674"/>
<dbReference type="EnsemblMetazoa" id="FBtr0088593">
    <property type="protein sequence ID" value="FBpp0087674"/>
    <property type="gene ID" value="FBgn0033397"/>
</dbReference>
<dbReference type="GeneID" id="35948"/>
<dbReference type="KEGG" id="dme:Dmel_CG10843"/>
<dbReference type="UCSC" id="CG10843-RA">
    <property type="organism name" value="d. melanogaster"/>
</dbReference>
<dbReference type="AGR" id="FB:FBgn0033397"/>
<dbReference type="CTD" id="35948"/>
<dbReference type="FlyBase" id="FBgn0033397">
    <property type="gene designation" value="Cyp4p3"/>
</dbReference>
<dbReference type="VEuPathDB" id="VectorBase:FBgn0033397"/>
<dbReference type="eggNOG" id="KOG0157">
    <property type="taxonomic scope" value="Eukaryota"/>
</dbReference>
<dbReference type="GeneTree" id="ENSGT00940000167779"/>
<dbReference type="HOGENOM" id="CLU_001570_5_1_1"/>
<dbReference type="InParanoid" id="Q9V559"/>
<dbReference type="OMA" id="WSDTLFK"/>
<dbReference type="OrthoDB" id="1470350at2759"/>
<dbReference type="PhylomeDB" id="Q9V559"/>
<dbReference type="Reactome" id="R-DME-193144">
    <property type="pathway name" value="Estrogen biosynthesis"/>
</dbReference>
<dbReference type="Reactome" id="R-DME-211976">
    <property type="pathway name" value="Endogenous sterols"/>
</dbReference>
<dbReference type="BioGRID-ORCS" id="35948">
    <property type="hits" value="0 hits in 3 CRISPR screens"/>
</dbReference>
<dbReference type="GenomeRNAi" id="35948"/>
<dbReference type="PRO" id="PR:Q9V559"/>
<dbReference type="Proteomes" id="UP000000803">
    <property type="component" value="Chromosome 2R"/>
</dbReference>
<dbReference type="Bgee" id="FBgn0033397">
    <property type="expression patterns" value="Expressed in visual pigment cell (sensu Nematoda and Protostomia) in testis and 49 other cell types or tissues"/>
</dbReference>
<dbReference type="GO" id="GO:0005789">
    <property type="term" value="C:endoplasmic reticulum membrane"/>
    <property type="evidence" value="ECO:0007669"/>
    <property type="project" value="UniProtKB-SubCell"/>
</dbReference>
<dbReference type="GO" id="GO:0020037">
    <property type="term" value="F:heme binding"/>
    <property type="evidence" value="ECO:0007669"/>
    <property type="project" value="InterPro"/>
</dbReference>
<dbReference type="GO" id="GO:0005506">
    <property type="term" value="F:iron ion binding"/>
    <property type="evidence" value="ECO:0007669"/>
    <property type="project" value="InterPro"/>
</dbReference>
<dbReference type="GO" id="GO:0004497">
    <property type="term" value="F:monooxygenase activity"/>
    <property type="evidence" value="ECO:0007669"/>
    <property type="project" value="UniProtKB-KW"/>
</dbReference>
<dbReference type="GO" id="GO:0016705">
    <property type="term" value="F:oxidoreductase activity, acting on paired donors, with incorporation or reduction of molecular oxygen"/>
    <property type="evidence" value="ECO:0007669"/>
    <property type="project" value="InterPro"/>
</dbReference>
<dbReference type="CDD" id="cd20628">
    <property type="entry name" value="CYP4"/>
    <property type="match status" value="1"/>
</dbReference>
<dbReference type="Gene3D" id="1.10.630.10">
    <property type="entry name" value="Cytochrome P450"/>
    <property type="match status" value="1"/>
</dbReference>
<dbReference type="InterPro" id="IPR001128">
    <property type="entry name" value="Cyt_P450"/>
</dbReference>
<dbReference type="InterPro" id="IPR017972">
    <property type="entry name" value="Cyt_P450_CS"/>
</dbReference>
<dbReference type="InterPro" id="IPR002401">
    <property type="entry name" value="Cyt_P450_E_grp-I"/>
</dbReference>
<dbReference type="InterPro" id="IPR036396">
    <property type="entry name" value="Cyt_P450_sf"/>
</dbReference>
<dbReference type="InterPro" id="IPR050196">
    <property type="entry name" value="Cytochrome_P450_Monoox"/>
</dbReference>
<dbReference type="PANTHER" id="PTHR24291:SF105">
    <property type="entry name" value="CYTOCHROME P450 4P1-RELATED"/>
    <property type="match status" value="1"/>
</dbReference>
<dbReference type="PANTHER" id="PTHR24291">
    <property type="entry name" value="CYTOCHROME P450 FAMILY 4"/>
    <property type="match status" value="1"/>
</dbReference>
<dbReference type="Pfam" id="PF00067">
    <property type="entry name" value="p450"/>
    <property type="match status" value="1"/>
</dbReference>
<dbReference type="PRINTS" id="PR00463">
    <property type="entry name" value="EP450I"/>
</dbReference>
<dbReference type="PRINTS" id="PR00385">
    <property type="entry name" value="P450"/>
</dbReference>
<dbReference type="SUPFAM" id="SSF48264">
    <property type="entry name" value="Cytochrome P450"/>
    <property type="match status" value="1"/>
</dbReference>
<dbReference type="PROSITE" id="PS00086">
    <property type="entry name" value="CYTOCHROME_P450"/>
    <property type="match status" value="1"/>
</dbReference>
<evidence type="ECO:0000250" key="1"/>
<evidence type="ECO:0000305" key="2"/>
<protein>
    <recommendedName>
        <fullName>Probable cytochrome P450 4p3</fullName>
        <ecNumber>1.14.-.-</ecNumber>
    </recommendedName>
    <alternativeName>
        <fullName>CYPIVP3</fullName>
    </alternativeName>
</protein>
<keyword id="KW-0256">Endoplasmic reticulum</keyword>
<keyword id="KW-0349">Heme</keyword>
<keyword id="KW-0408">Iron</keyword>
<keyword id="KW-0472">Membrane</keyword>
<keyword id="KW-0479">Metal-binding</keyword>
<keyword id="KW-0492">Microsome</keyword>
<keyword id="KW-0503">Monooxygenase</keyword>
<keyword id="KW-0560">Oxidoreductase</keyword>
<keyword id="KW-1185">Reference proteome</keyword>
<comment type="function">
    <text evidence="1">May be involved in the metabolism of insect hormones and in the breakdown of synthetic insecticides.</text>
</comment>
<comment type="cofactor">
    <cofactor evidence="1">
        <name>heme</name>
        <dbReference type="ChEBI" id="CHEBI:30413"/>
    </cofactor>
</comment>
<comment type="subcellular location">
    <subcellularLocation>
        <location evidence="2">Endoplasmic reticulum membrane</location>
        <topology evidence="2">Peripheral membrane protein</topology>
    </subcellularLocation>
    <subcellularLocation>
        <location evidence="2">Microsome membrane</location>
        <topology evidence="2">Peripheral membrane protein</topology>
    </subcellularLocation>
</comment>
<comment type="similarity">
    <text evidence="2">Belongs to the cytochrome P450 family.</text>
</comment>
<name>CP4P3_DROME</name>
<sequence length="515" mass="59652">MLILWLVGAFIVLIQWIYRLNRDYCILGFFAKRIRTKNGQNPESIAPLVKGSTIFANSFDLYGKDHSGVFEHSRDCAKKLGKSYAEYAMGTAIYNVIDADSAERVLNDPNLINKGTIYDFLHPFLRTGLLTSTGKKWHARRKMLSPTFHFNILNQFQEIFITESLKFLEQFKGNDEAIISLNEVIPRFTLNSICETAMGVKLDEMAEKGDRYRENFRQIEECFIRRMSNPLLWSDTLFKMFAEKDYASALDVVHGFSSEIIAKRRDQLNDEIDSRGNTQTAEDELFTSKKRFAMLDTLILAEKDGLIDHIGICEEVDTLMFEGYDTTSIGLMFGLMNMSLYPEEQEKCYQEIQANIDDELNILNIGQLNKLKNLEYFIKETMRLFPSVPAMGRETTRETELSNGLILPKGSQIFVHVFDIHRNPEYWDSPEEFRPERFLPENSQNRHTYAYIPFSAGQRNCIGQKFAMQEMKTLMVALLKQFQILPEIDPKTIVFQTGLTLRTKNQIHVKLVRRK</sequence>